<evidence type="ECO:0000255" key="1">
    <source>
        <dbReference type="HAMAP-Rule" id="MF_03112"/>
    </source>
</evidence>
<accession>B2DFU2</accession>
<feature type="chain" id="PRO_0000388228" description="ATPase GET3">
    <location>
        <begin position="1"/>
        <end position="339"/>
    </location>
</feature>
<feature type="active site" evidence="1">
    <location>
        <position position="66"/>
    </location>
</feature>
<feature type="binding site" evidence="1">
    <location>
        <begin position="37"/>
        <end position="44"/>
    </location>
    <ligand>
        <name>ATP</name>
        <dbReference type="ChEBI" id="CHEBI:30616"/>
    </ligand>
</feature>
<feature type="binding site" evidence="1">
    <location>
        <position position="237"/>
    </location>
    <ligand>
        <name>ATP</name>
        <dbReference type="ChEBI" id="CHEBI:30616"/>
    </ligand>
</feature>
<feature type="binding site" evidence="1">
    <location>
        <position position="264"/>
    </location>
    <ligand>
        <name>ATP</name>
        <dbReference type="ChEBI" id="CHEBI:30616"/>
    </ligand>
</feature>
<feature type="binding site" evidence="1">
    <location>
        <position position="275"/>
    </location>
    <ligand>
        <name>Zn(2+)</name>
        <dbReference type="ChEBI" id="CHEBI:29105"/>
        <note>ligand shared between dimeric partners</note>
    </ligand>
</feature>
<feature type="binding site" evidence="1">
    <location>
        <position position="278"/>
    </location>
    <ligand>
        <name>Zn(2+)</name>
        <dbReference type="ChEBI" id="CHEBI:29105"/>
        <note>ligand shared between dimeric partners</note>
    </ligand>
</feature>
<name>GET3_RHOGU</name>
<comment type="function">
    <text evidence="1">ATPase required for the post-translational delivery of tail-anchored (TA) proteins to the endoplasmic reticulum. Recognizes and selectively binds the transmembrane domain of TA proteins in the cytosol. This complex then targets to the endoplasmic reticulum by membrane-bound receptors, where the tail-anchored protein is released for insertion. This process is regulated by ATP binding and hydrolysis. ATP binding drives the homodimer towards the closed dimer state, facilitating recognition of newly synthesized TA membrane proteins. ATP hydrolysis is required for insertion. Subsequently, the homodimer reverts towards the open dimer state, lowering its affinity for the membrane-bound receptor, and returning it to the cytosol to initiate a new round of targeting.</text>
</comment>
<comment type="subunit">
    <text evidence="1">Homodimer.</text>
</comment>
<comment type="subcellular location">
    <subcellularLocation>
        <location evidence="1">Cytoplasm</location>
    </subcellularLocation>
    <subcellularLocation>
        <location evidence="1">Endoplasmic reticulum</location>
    </subcellularLocation>
</comment>
<comment type="similarity">
    <text evidence="1">Belongs to the arsA ATPase family.</text>
</comment>
<protein>
    <recommendedName>
        <fullName evidence="1">ATPase GET3</fullName>
        <ecNumber evidence="1">3.6.-.-</ecNumber>
    </recommendedName>
    <alternativeName>
        <fullName evidence="1">Arsenical pump-driving ATPase</fullName>
    </alternativeName>
    <alternativeName>
        <fullName evidence="1">Arsenite-stimulated ATPase</fullName>
    </alternativeName>
    <alternativeName>
        <fullName evidence="1">Golgi to ER traffic protein 3</fullName>
    </alternativeName>
    <alternativeName>
        <fullName evidence="1">Guided entry of tail-anchored proteins 3</fullName>
    </alternativeName>
</protein>
<keyword id="KW-0067">ATP-binding</keyword>
<keyword id="KW-0963">Cytoplasm</keyword>
<keyword id="KW-0256">Endoplasmic reticulum</keyword>
<keyword id="KW-0378">Hydrolase</keyword>
<keyword id="KW-0479">Metal-binding</keyword>
<keyword id="KW-0547">Nucleotide-binding</keyword>
<keyword id="KW-0813">Transport</keyword>
<keyword id="KW-0862">Zinc</keyword>
<reference key="1">
    <citation type="journal article" date="2010" name="J. Biosci. Bioeng.">
        <title>Genes involved in novel adaptive aluminum resistance in Rhodotorula glutinis.</title>
        <authorList>
            <person name="Tani A."/>
            <person name="Kawahara T."/>
            <person name="Yamamoto Y."/>
            <person name="Kimbara K."/>
            <person name="Kawai F."/>
        </authorList>
    </citation>
    <scope>NUCLEOTIDE SEQUENCE [GENOMIC DNA]</scope>
</reference>
<organism>
    <name type="scientific">Rhodotorula glutinis</name>
    <name type="common">Yeast</name>
    <dbReference type="NCBI Taxonomy" id="5535"/>
    <lineage>
        <taxon>Eukaryota</taxon>
        <taxon>Fungi</taxon>
        <taxon>Dikarya</taxon>
        <taxon>Basidiomycota</taxon>
        <taxon>Pucciniomycotina</taxon>
        <taxon>Microbotryomycetes</taxon>
        <taxon>Sporidiobolales</taxon>
        <taxon>Sporidiobolaceae</taxon>
        <taxon>Rhodotorula</taxon>
    </lineage>
</organism>
<dbReference type="EC" id="3.6.-.-" evidence="1"/>
<dbReference type="EMBL" id="AB434422">
    <property type="protein sequence ID" value="BAG28181.1"/>
    <property type="molecule type" value="Genomic_DNA"/>
</dbReference>
<dbReference type="SMR" id="B2DFU2"/>
<dbReference type="GO" id="GO:0043529">
    <property type="term" value="C:GET complex"/>
    <property type="evidence" value="ECO:0007669"/>
    <property type="project" value="TreeGrafter"/>
</dbReference>
<dbReference type="GO" id="GO:0005524">
    <property type="term" value="F:ATP binding"/>
    <property type="evidence" value="ECO:0007669"/>
    <property type="project" value="UniProtKB-UniRule"/>
</dbReference>
<dbReference type="GO" id="GO:0016887">
    <property type="term" value="F:ATP hydrolysis activity"/>
    <property type="evidence" value="ECO:0007669"/>
    <property type="project" value="InterPro"/>
</dbReference>
<dbReference type="GO" id="GO:0046872">
    <property type="term" value="F:metal ion binding"/>
    <property type="evidence" value="ECO:0007669"/>
    <property type="project" value="UniProtKB-KW"/>
</dbReference>
<dbReference type="GO" id="GO:0071816">
    <property type="term" value="P:tail-anchored membrane protein insertion into ER membrane"/>
    <property type="evidence" value="ECO:0007669"/>
    <property type="project" value="TreeGrafter"/>
</dbReference>
<dbReference type="CDD" id="cd02035">
    <property type="entry name" value="ArsA"/>
    <property type="match status" value="1"/>
</dbReference>
<dbReference type="FunFam" id="3.40.50.300:FF:000235">
    <property type="entry name" value="ATPase ASNA1"/>
    <property type="match status" value="1"/>
</dbReference>
<dbReference type="Gene3D" id="3.40.50.300">
    <property type="entry name" value="P-loop containing nucleotide triphosphate hydrolases"/>
    <property type="match status" value="1"/>
</dbReference>
<dbReference type="HAMAP" id="MF_03112">
    <property type="entry name" value="Asna1_Get3"/>
    <property type="match status" value="1"/>
</dbReference>
<dbReference type="InterPro" id="IPR025723">
    <property type="entry name" value="Anion-transp_ATPase-like_dom"/>
</dbReference>
<dbReference type="InterPro" id="IPR016300">
    <property type="entry name" value="ATPase_ArsA/GET3"/>
</dbReference>
<dbReference type="InterPro" id="IPR027542">
    <property type="entry name" value="ATPase_ArsA/GET3_euk"/>
</dbReference>
<dbReference type="InterPro" id="IPR027417">
    <property type="entry name" value="P-loop_NTPase"/>
</dbReference>
<dbReference type="NCBIfam" id="TIGR00345">
    <property type="entry name" value="GET3_arsA_TRC40"/>
    <property type="match status" value="1"/>
</dbReference>
<dbReference type="PANTHER" id="PTHR10803">
    <property type="entry name" value="ARSENICAL PUMP-DRIVING ATPASE ARSENITE-TRANSLOCATING ATPASE"/>
    <property type="match status" value="1"/>
</dbReference>
<dbReference type="PANTHER" id="PTHR10803:SF3">
    <property type="entry name" value="ATPASE GET3"/>
    <property type="match status" value="1"/>
</dbReference>
<dbReference type="Pfam" id="PF02374">
    <property type="entry name" value="ArsA_ATPase"/>
    <property type="match status" value="1"/>
</dbReference>
<dbReference type="SUPFAM" id="SSF52540">
    <property type="entry name" value="P-loop containing nucleoside triphosphate hydrolases"/>
    <property type="match status" value="1"/>
</dbReference>
<gene>
    <name evidence="1" type="primary">GET3</name>
    <name type="synonym">ARS</name>
</gene>
<sequence length="339" mass="37271">MASTAFVCAEPEGDALPPSLQNLLDQDSLKWIFVGGKGGVGKTTTSCSLAIQLAAVRESVLLISTDPAHNLSDAFSQKFGKEASKVNGFTNLFAMEIDPSASMQDMVESGDDSGMNGMMQDLAFAIPGIDEAMGFAEVMKHVKSMQFSAIVFDTAPTGHTLRFLSFPSVLEKALGKLSGLSGRFGPMLNQIGSMMGGGLNTSEMFEKLESMREVVTEVNAQFKNPDLTTFVPVMISEFLSLYETERLIQELTQYQIDVHDIVVNQLLYPENDSQCKHCKVRWTQQQKYLKEAYELYGEDFHIVRMPLLSQEVRGTDALKKCLLIEPYKAGQVVDLSASS</sequence>
<proteinExistence type="inferred from homology"/>